<organism>
    <name type="scientific">Escherichia coli O157:H7</name>
    <dbReference type="NCBI Taxonomy" id="83334"/>
    <lineage>
        <taxon>Bacteria</taxon>
        <taxon>Pseudomonadati</taxon>
        <taxon>Pseudomonadota</taxon>
        <taxon>Gammaproteobacteria</taxon>
        <taxon>Enterobacterales</taxon>
        <taxon>Enterobacteriaceae</taxon>
        <taxon>Escherichia</taxon>
    </lineage>
</organism>
<feature type="chain" id="PRO_0000072219" description="Stringent starvation protein B">
    <location>
        <begin position="1"/>
        <end position="165"/>
    </location>
</feature>
<feature type="region of interest" description="Disordered" evidence="2">
    <location>
        <begin position="119"/>
        <end position="165"/>
    </location>
</feature>
<feature type="compositionally biased region" description="Basic and acidic residues" evidence="2">
    <location>
        <begin position="134"/>
        <end position="143"/>
    </location>
</feature>
<protein>
    <recommendedName>
        <fullName>Stringent starvation protein B</fullName>
    </recommendedName>
</protein>
<proteinExistence type="inferred from homology"/>
<comment type="function">
    <text evidence="1">Seems to act in concert with SspA in the regulation of several proteins during exponential and stationary-phase growth. The exact function of SspB is not yet known (By similarity).</text>
</comment>
<comment type="induction">
    <text evidence="1">By amino acid starvation.</text>
</comment>
<comment type="similarity">
    <text evidence="3">Belongs to the SspB family.</text>
</comment>
<dbReference type="EMBL" id="AE005174">
    <property type="protein sequence ID" value="AAG58356.1"/>
    <property type="molecule type" value="Genomic_DNA"/>
</dbReference>
<dbReference type="EMBL" id="BA000007">
    <property type="protein sequence ID" value="BAB37524.1"/>
    <property type="molecule type" value="Genomic_DNA"/>
</dbReference>
<dbReference type="PIR" id="E91141">
    <property type="entry name" value="E91141"/>
</dbReference>
<dbReference type="PIR" id="H85986">
    <property type="entry name" value="H85986"/>
</dbReference>
<dbReference type="RefSeq" id="NP_312128.1">
    <property type="nucleotide sequence ID" value="NC_002695.1"/>
</dbReference>
<dbReference type="RefSeq" id="WP_000366129.1">
    <property type="nucleotide sequence ID" value="NZ_VOAI01000014.1"/>
</dbReference>
<dbReference type="EMDB" id="EMD-28585"/>
<dbReference type="SMR" id="P0AFZ4"/>
<dbReference type="STRING" id="155864.Z4586"/>
<dbReference type="GeneID" id="916050"/>
<dbReference type="GeneID" id="93778758"/>
<dbReference type="KEGG" id="ece:Z4586"/>
<dbReference type="KEGG" id="ecs:ECs_4101"/>
<dbReference type="PATRIC" id="fig|386585.9.peg.4281"/>
<dbReference type="eggNOG" id="COG2969">
    <property type="taxonomic scope" value="Bacteria"/>
</dbReference>
<dbReference type="HOGENOM" id="CLU_118425_0_0_6"/>
<dbReference type="OMA" id="DMGNEWI"/>
<dbReference type="Proteomes" id="UP000000558">
    <property type="component" value="Chromosome"/>
</dbReference>
<dbReference type="Proteomes" id="UP000002519">
    <property type="component" value="Chromosome"/>
</dbReference>
<dbReference type="GO" id="GO:0005829">
    <property type="term" value="C:cytosol"/>
    <property type="evidence" value="ECO:0007669"/>
    <property type="project" value="TreeGrafter"/>
</dbReference>
<dbReference type="GO" id="GO:0005840">
    <property type="term" value="C:ribosome"/>
    <property type="evidence" value="ECO:0007669"/>
    <property type="project" value="TreeGrafter"/>
</dbReference>
<dbReference type="GO" id="GO:0045732">
    <property type="term" value="P:positive regulation of protein catabolic process"/>
    <property type="evidence" value="ECO:0007669"/>
    <property type="project" value="TreeGrafter"/>
</dbReference>
<dbReference type="FunFam" id="2.30.30.220:FF:000001">
    <property type="entry name" value="ClpXP protease specificity-enhancing factor"/>
    <property type="match status" value="1"/>
</dbReference>
<dbReference type="Gene3D" id="2.30.30.220">
    <property type="entry name" value="SspB-like"/>
    <property type="match status" value="1"/>
</dbReference>
<dbReference type="InterPro" id="IPR007481">
    <property type="entry name" value="SspB"/>
</dbReference>
<dbReference type="InterPro" id="IPR036760">
    <property type="entry name" value="SspB-like_sf"/>
</dbReference>
<dbReference type="NCBIfam" id="NF008762">
    <property type="entry name" value="PRK11798.1-1"/>
    <property type="match status" value="1"/>
</dbReference>
<dbReference type="NCBIfam" id="NF008763">
    <property type="entry name" value="PRK11798.1-2"/>
    <property type="match status" value="1"/>
</dbReference>
<dbReference type="NCBIfam" id="NF008769">
    <property type="entry name" value="PRK11798.2-5"/>
    <property type="match status" value="1"/>
</dbReference>
<dbReference type="PANTHER" id="PTHR37486">
    <property type="entry name" value="STRINGENT STARVATION PROTEIN B"/>
    <property type="match status" value="1"/>
</dbReference>
<dbReference type="PANTHER" id="PTHR37486:SF1">
    <property type="entry name" value="STRINGENT STARVATION PROTEIN B"/>
    <property type="match status" value="1"/>
</dbReference>
<dbReference type="Pfam" id="PF04386">
    <property type="entry name" value="SspB"/>
    <property type="match status" value="1"/>
</dbReference>
<dbReference type="PIRSF" id="PIRSF005276">
    <property type="entry name" value="SspB"/>
    <property type="match status" value="1"/>
</dbReference>
<dbReference type="SUPFAM" id="SSF101738">
    <property type="entry name" value="SspB-like"/>
    <property type="match status" value="1"/>
</dbReference>
<keyword id="KW-1185">Reference proteome</keyword>
<keyword id="KW-0346">Stress response</keyword>
<sequence>MDLSQLTPRRPYLLRAFYEWLLDNQLTPHLVVDVTLPGVQVPMEYARDGQIVLNIAPRAVGNLELANDEVRFNARFGGIPRQVSVPLAAVLAIYARENGAGTMFEPEAAYDEDTSIMNDEEASADNETVMSVIDGDKPDHDDDTHPDDEPPQPPRGGRPALRVVK</sequence>
<gene>
    <name type="primary">sspB</name>
    <name type="ordered locus">Z4586</name>
    <name type="ordered locus">ECs4101</name>
</gene>
<accession>P0AFZ4</accession>
<accession>P25663</accession>
<reference key="1">
    <citation type="journal article" date="2001" name="Nature">
        <title>Genome sequence of enterohaemorrhagic Escherichia coli O157:H7.</title>
        <authorList>
            <person name="Perna N.T."/>
            <person name="Plunkett G. III"/>
            <person name="Burland V."/>
            <person name="Mau B."/>
            <person name="Glasner J.D."/>
            <person name="Rose D.J."/>
            <person name="Mayhew G.F."/>
            <person name="Evans P.S."/>
            <person name="Gregor J."/>
            <person name="Kirkpatrick H.A."/>
            <person name="Posfai G."/>
            <person name="Hackett J."/>
            <person name="Klink S."/>
            <person name="Boutin A."/>
            <person name="Shao Y."/>
            <person name="Miller L."/>
            <person name="Grotbeck E.J."/>
            <person name="Davis N.W."/>
            <person name="Lim A."/>
            <person name="Dimalanta E.T."/>
            <person name="Potamousis K."/>
            <person name="Apodaca J."/>
            <person name="Anantharaman T.S."/>
            <person name="Lin J."/>
            <person name="Yen G."/>
            <person name="Schwartz D.C."/>
            <person name="Welch R.A."/>
            <person name="Blattner F.R."/>
        </authorList>
    </citation>
    <scope>NUCLEOTIDE SEQUENCE [LARGE SCALE GENOMIC DNA]</scope>
    <source>
        <strain>O157:H7 / EDL933 / ATCC 700927 / EHEC</strain>
    </source>
</reference>
<reference key="2">
    <citation type="journal article" date="2001" name="DNA Res.">
        <title>Complete genome sequence of enterohemorrhagic Escherichia coli O157:H7 and genomic comparison with a laboratory strain K-12.</title>
        <authorList>
            <person name="Hayashi T."/>
            <person name="Makino K."/>
            <person name="Ohnishi M."/>
            <person name="Kurokawa K."/>
            <person name="Ishii K."/>
            <person name="Yokoyama K."/>
            <person name="Han C.-G."/>
            <person name="Ohtsubo E."/>
            <person name="Nakayama K."/>
            <person name="Murata T."/>
            <person name="Tanaka M."/>
            <person name="Tobe T."/>
            <person name="Iida T."/>
            <person name="Takami H."/>
            <person name="Honda T."/>
            <person name="Sasakawa C."/>
            <person name="Ogasawara N."/>
            <person name="Yasunaga T."/>
            <person name="Kuhara S."/>
            <person name="Shiba T."/>
            <person name="Hattori M."/>
            <person name="Shinagawa H."/>
        </authorList>
    </citation>
    <scope>NUCLEOTIDE SEQUENCE [LARGE SCALE GENOMIC DNA]</scope>
    <source>
        <strain>O157:H7 / Sakai / RIMD 0509952 / EHEC</strain>
    </source>
</reference>
<name>SSPB_ECO57</name>
<evidence type="ECO:0000250" key="1"/>
<evidence type="ECO:0000256" key="2">
    <source>
        <dbReference type="SAM" id="MobiDB-lite"/>
    </source>
</evidence>
<evidence type="ECO:0000305" key="3"/>